<protein>
    <recommendedName>
        <fullName evidence="1">S-adenosylmethionine:tRNA ribosyltransferase-isomerase</fullName>
        <ecNumber evidence="1">2.4.99.17</ecNumber>
    </recommendedName>
    <alternativeName>
        <fullName evidence="1">Queuosine biosynthesis protein QueA</fullName>
    </alternativeName>
</protein>
<reference key="1">
    <citation type="journal article" date="2008" name="J. Bacteriol.">
        <title>The genome of Heliobacterium modesticaldum, a phototrophic representative of the Firmicutes containing the simplest photosynthetic apparatus.</title>
        <authorList>
            <person name="Sattley W.M."/>
            <person name="Madigan M.T."/>
            <person name="Swingley W.D."/>
            <person name="Cheung P.C."/>
            <person name="Clocksin K.M."/>
            <person name="Conrad A.L."/>
            <person name="Dejesa L.C."/>
            <person name="Honchak B.M."/>
            <person name="Jung D.O."/>
            <person name="Karbach L.E."/>
            <person name="Kurdoglu A."/>
            <person name="Lahiri S."/>
            <person name="Mastrian S.D."/>
            <person name="Page L.E."/>
            <person name="Taylor H.L."/>
            <person name="Wang Z.T."/>
            <person name="Raymond J."/>
            <person name="Chen M."/>
            <person name="Blankenship R.E."/>
            <person name="Touchman J.W."/>
        </authorList>
    </citation>
    <scope>NUCLEOTIDE SEQUENCE [LARGE SCALE GENOMIC DNA]</scope>
    <source>
        <strain>ATCC 51547 / Ice1</strain>
    </source>
</reference>
<keyword id="KW-0963">Cytoplasm</keyword>
<keyword id="KW-0671">Queuosine biosynthesis</keyword>
<keyword id="KW-1185">Reference proteome</keyword>
<keyword id="KW-0949">S-adenosyl-L-methionine</keyword>
<keyword id="KW-0808">Transferase</keyword>
<dbReference type="EC" id="2.4.99.17" evidence="1"/>
<dbReference type="EMBL" id="CP000930">
    <property type="protein sequence ID" value="ABZ84393.1"/>
    <property type="molecule type" value="Genomic_DNA"/>
</dbReference>
<dbReference type="RefSeq" id="WP_012282897.1">
    <property type="nucleotide sequence ID" value="NC_010337.2"/>
</dbReference>
<dbReference type="SMR" id="B0TF76"/>
<dbReference type="STRING" id="498761.HM1_1835"/>
<dbReference type="KEGG" id="hmo:HM1_1835"/>
<dbReference type="eggNOG" id="COG0809">
    <property type="taxonomic scope" value="Bacteria"/>
</dbReference>
<dbReference type="HOGENOM" id="CLU_039110_1_0_9"/>
<dbReference type="OrthoDB" id="9805933at2"/>
<dbReference type="UniPathway" id="UPA00392"/>
<dbReference type="Proteomes" id="UP000008550">
    <property type="component" value="Chromosome"/>
</dbReference>
<dbReference type="GO" id="GO:0005737">
    <property type="term" value="C:cytoplasm"/>
    <property type="evidence" value="ECO:0007669"/>
    <property type="project" value="UniProtKB-SubCell"/>
</dbReference>
<dbReference type="GO" id="GO:0051075">
    <property type="term" value="F:S-adenosylmethionine:tRNA ribosyltransferase-isomerase activity"/>
    <property type="evidence" value="ECO:0007669"/>
    <property type="project" value="UniProtKB-EC"/>
</dbReference>
<dbReference type="GO" id="GO:0008616">
    <property type="term" value="P:queuosine biosynthetic process"/>
    <property type="evidence" value="ECO:0007669"/>
    <property type="project" value="UniProtKB-UniRule"/>
</dbReference>
<dbReference type="GO" id="GO:0002099">
    <property type="term" value="P:tRNA wobble guanine modification"/>
    <property type="evidence" value="ECO:0007669"/>
    <property type="project" value="TreeGrafter"/>
</dbReference>
<dbReference type="FunFam" id="2.40.10.240:FF:000002">
    <property type="entry name" value="S-adenosylmethionine:tRNA ribosyltransferase-isomerase"/>
    <property type="match status" value="1"/>
</dbReference>
<dbReference type="FunFam" id="3.40.1780.10:FF:000001">
    <property type="entry name" value="S-adenosylmethionine:tRNA ribosyltransferase-isomerase"/>
    <property type="match status" value="1"/>
</dbReference>
<dbReference type="Gene3D" id="2.40.10.240">
    <property type="entry name" value="QueA-like"/>
    <property type="match status" value="1"/>
</dbReference>
<dbReference type="Gene3D" id="3.40.1780.10">
    <property type="entry name" value="QueA-like"/>
    <property type="match status" value="1"/>
</dbReference>
<dbReference type="HAMAP" id="MF_00113">
    <property type="entry name" value="QueA"/>
    <property type="match status" value="1"/>
</dbReference>
<dbReference type="InterPro" id="IPR003699">
    <property type="entry name" value="QueA"/>
</dbReference>
<dbReference type="InterPro" id="IPR042118">
    <property type="entry name" value="QueA_dom1"/>
</dbReference>
<dbReference type="InterPro" id="IPR042119">
    <property type="entry name" value="QueA_dom2"/>
</dbReference>
<dbReference type="InterPro" id="IPR036100">
    <property type="entry name" value="QueA_sf"/>
</dbReference>
<dbReference type="NCBIfam" id="NF001140">
    <property type="entry name" value="PRK00147.1"/>
    <property type="match status" value="1"/>
</dbReference>
<dbReference type="NCBIfam" id="TIGR00113">
    <property type="entry name" value="queA"/>
    <property type="match status" value="1"/>
</dbReference>
<dbReference type="PANTHER" id="PTHR30307">
    <property type="entry name" value="S-ADENOSYLMETHIONINE:TRNA RIBOSYLTRANSFERASE-ISOMERASE"/>
    <property type="match status" value="1"/>
</dbReference>
<dbReference type="PANTHER" id="PTHR30307:SF0">
    <property type="entry name" value="S-ADENOSYLMETHIONINE:TRNA RIBOSYLTRANSFERASE-ISOMERASE"/>
    <property type="match status" value="1"/>
</dbReference>
<dbReference type="Pfam" id="PF02547">
    <property type="entry name" value="Queuosine_synth"/>
    <property type="match status" value="1"/>
</dbReference>
<dbReference type="SUPFAM" id="SSF111337">
    <property type="entry name" value="QueA-like"/>
    <property type="match status" value="1"/>
</dbReference>
<organism>
    <name type="scientific">Heliobacterium modesticaldum (strain ATCC 51547 / Ice1)</name>
    <dbReference type="NCBI Taxonomy" id="498761"/>
    <lineage>
        <taxon>Bacteria</taxon>
        <taxon>Bacillati</taxon>
        <taxon>Bacillota</taxon>
        <taxon>Clostridia</taxon>
        <taxon>Eubacteriales</taxon>
        <taxon>Heliobacteriaceae</taxon>
        <taxon>Heliomicrobium</taxon>
    </lineage>
</organism>
<feature type="chain" id="PRO_1000094781" description="S-adenosylmethionine:tRNA ribosyltransferase-isomerase">
    <location>
        <begin position="1"/>
        <end position="344"/>
    </location>
</feature>
<proteinExistence type="inferred from homology"/>
<gene>
    <name evidence="1" type="primary">queA</name>
    <name type="ordered locus">Helmi_17680</name>
    <name type="ORF">HM1_1835</name>
</gene>
<evidence type="ECO:0000255" key="1">
    <source>
        <dbReference type="HAMAP-Rule" id="MF_00113"/>
    </source>
</evidence>
<comment type="function">
    <text evidence="1">Transfers and isomerizes the ribose moiety from AdoMet to the 7-aminomethyl group of 7-deazaguanine (preQ1-tRNA) to give epoxyqueuosine (oQ-tRNA).</text>
</comment>
<comment type="catalytic activity">
    <reaction evidence="1">
        <text>7-aminomethyl-7-carbaguanosine(34) in tRNA + S-adenosyl-L-methionine = epoxyqueuosine(34) in tRNA + adenine + L-methionine + 2 H(+)</text>
        <dbReference type="Rhea" id="RHEA:32155"/>
        <dbReference type="Rhea" id="RHEA-COMP:10342"/>
        <dbReference type="Rhea" id="RHEA-COMP:18582"/>
        <dbReference type="ChEBI" id="CHEBI:15378"/>
        <dbReference type="ChEBI" id="CHEBI:16708"/>
        <dbReference type="ChEBI" id="CHEBI:57844"/>
        <dbReference type="ChEBI" id="CHEBI:59789"/>
        <dbReference type="ChEBI" id="CHEBI:82833"/>
        <dbReference type="ChEBI" id="CHEBI:194443"/>
        <dbReference type="EC" id="2.4.99.17"/>
    </reaction>
</comment>
<comment type="pathway">
    <text evidence="1">tRNA modification; tRNA-queuosine biosynthesis.</text>
</comment>
<comment type="subunit">
    <text evidence="1">Monomer.</text>
</comment>
<comment type="subcellular location">
    <subcellularLocation>
        <location evidence="1">Cytoplasm</location>
    </subcellularLocation>
</comment>
<comment type="similarity">
    <text evidence="1">Belongs to the QueA family.</text>
</comment>
<accession>B0TF76</accession>
<sequence length="344" mass="38481">MEVALYDYELPKEAIAQTPVEPRDASRLMVLERRTGAVDHRIFRDLVHILHPGDLLVVNRTRVIPARLFGKKRDSDVTVEIVLLTPMGDDRWEVLVRPGRRLKPGVFVDLGEGRLAAEIVETTDFGGRVVRFHYSGDFDTLIDEIGQMPLPPYIETALPRQEAERYQTVYSQERGSAAAPTAGLHFTPQLLEDLKKRGIEITSVLLHVGLGTFRPVQVDRIEEHKMHSEFFQVDPEAARAIAKAKQEGRRVIAVGTTVARTLETAAGLHNGTVAAGSGWTDIFIYPGYTFQCIDGLITNFHLPRSTLLMLVSAFAGREQVLAAYREALEKGYRFFSFGDAMLII</sequence>
<name>QUEA_HELMI</name>